<feature type="chain" id="PRO_0000104811" description="Large ribosomal subunit protein uL15">
    <location>
        <begin position="1"/>
        <end position="146"/>
    </location>
</feature>
<feature type="region of interest" description="Disordered" evidence="2">
    <location>
        <begin position="1"/>
        <end position="54"/>
    </location>
</feature>
<feature type="compositionally biased region" description="Basic and acidic residues" evidence="2">
    <location>
        <begin position="1"/>
        <end position="18"/>
    </location>
</feature>
<feature type="compositionally biased region" description="Gly residues" evidence="2">
    <location>
        <begin position="42"/>
        <end position="52"/>
    </location>
</feature>
<protein>
    <recommendedName>
        <fullName evidence="1">Large ribosomal subunit protein uL15</fullName>
    </recommendedName>
    <alternativeName>
        <fullName evidence="3">50S ribosomal protein L15</fullName>
    </alternativeName>
</protein>
<reference key="1">
    <citation type="journal article" date="2001" name="Lancet">
        <title>Whole genome sequencing of meticillin-resistant Staphylococcus aureus.</title>
        <authorList>
            <person name="Kuroda M."/>
            <person name="Ohta T."/>
            <person name="Uchiyama I."/>
            <person name="Baba T."/>
            <person name="Yuzawa H."/>
            <person name="Kobayashi I."/>
            <person name="Cui L."/>
            <person name="Oguchi A."/>
            <person name="Aoki K."/>
            <person name="Nagai Y."/>
            <person name="Lian J.-Q."/>
            <person name="Ito T."/>
            <person name="Kanamori M."/>
            <person name="Matsumaru H."/>
            <person name="Maruyama A."/>
            <person name="Murakami H."/>
            <person name="Hosoyama A."/>
            <person name="Mizutani-Ui Y."/>
            <person name="Takahashi N.K."/>
            <person name="Sawano T."/>
            <person name="Inoue R."/>
            <person name="Kaito C."/>
            <person name="Sekimizu K."/>
            <person name="Hirakawa H."/>
            <person name="Kuhara S."/>
            <person name="Goto S."/>
            <person name="Yabuzaki J."/>
            <person name="Kanehisa M."/>
            <person name="Yamashita A."/>
            <person name="Oshima K."/>
            <person name="Furuya K."/>
            <person name="Yoshino C."/>
            <person name="Shiba T."/>
            <person name="Hattori M."/>
            <person name="Ogasawara N."/>
            <person name="Hayashi H."/>
            <person name="Hiramatsu K."/>
        </authorList>
    </citation>
    <scope>NUCLEOTIDE SEQUENCE [LARGE SCALE GENOMIC DNA]</scope>
    <source>
        <strain>Mu50 / ATCC 700699</strain>
    </source>
</reference>
<gene>
    <name evidence="1" type="primary">rplO</name>
    <name type="ordered locus">SAV2231</name>
</gene>
<dbReference type="EMBL" id="BA000017">
    <property type="protein sequence ID" value="BAB58393.1"/>
    <property type="molecule type" value="Genomic_DNA"/>
</dbReference>
<dbReference type="RefSeq" id="WP_000766074.1">
    <property type="nucleotide sequence ID" value="NC_002758.2"/>
</dbReference>
<dbReference type="SMR" id="P0A0F5"/>
<dbReference type="GeneID" id="98346543"/>
<dbReference type="KEGG" id="sav:SAV2231"/>
<dbReference type="HOGENOM" id="CLU_055188_4_2_9"/>
<dbReference type="PhylomeDB" id="P0A0F5"/>
<dbReference type="Proteomes" id="UP000002481">
    <property type="component" value="Chromosome"/>
</dbReference>
<dbReference type="GO" id="GO:0022625">
    <property type="term" value="C:cytosolic large ribosomal subunit"/>
    <property type="evidence" value="ECO:0007669"/>
    <property type="project" value="TreeGrafter"/>
</dbReference>
<dbReference type="GO" id="GO:0019843">
    <property type="term" value="F:rRNA binding"/>
    <property type="evidence" value="ECO:0007669"/>
    <property type="project" value="UniProtKB-UniRule"/>
</dbReference>
<dbReference type="GO" id="GO:0003735">
    <property type="term" value="F:structural constituent of ribosome"/>
    <property type="evidence" value="ECO:0007669"/>
    <property type="project" value="InterPro"/>
</dbReference>
<dbReference type="GO" id="GO:0006412">
    <property type="term" value="P:translation"/>
    <property type="evidence" value="ECO:0007669"/>
    <property type="project" value="UniProtKB-UniRule"/>
</dbReference>
<dbReference type="FunFam" id="3.100.10.10:FF:000004">
    <property type="entry name" value="50S ribosomal protein L15"/>
    <property type="match status" value="1"/>
</dbReference>
<dbReference type="Gene3D" id="3.100.10.10">
    <property type="match status" value="1"/>
</dbReference>
<dbReference type="HAMAP" id="MF_01341">
    <property type="entry name" value="Ribosomal_uL15"/>
    <property type="match status" value="1"/>
</dbReference>
<dbReference type="InterPro" id="IPR030878">
    <property type="entry name" value="Ribosomal_uL15"/>
</dbReference>
<dbReference type="InterPro" id="IPR021131">
    <property type="entry name" value="Ribosomal_uL15/eL18"/>
</dbReference>
<dbReference type="InterPro" id="IPR036227">
    <property type="entry name" value="Ribosomal_uL15/eL18_sf"/>
</dbReference>
<dbReference type="InterPro" id="IPR005749">
    <property type="entry name" value="Ribosomal_uL15_bac-type"/>
</dbReference>
<dbReference type="InterPro" id="IPR001196">
    <property type="entry name" value="Ribosomal_uL15_CS"/>
</dbReference>
<dbReference type="NCBIfam" id="TIGR01071">
    <property type="entry name" value="rplO_bact"/>
    <property type="match status" value="1"/>
</dbReference>
<dbReference type="PANTHER" id="PTHR12934">
    <property type="entry name" value="50S RIBOSOMAL PROTEIN L15"/>
    <property type="match status" value="1"/>
</dbReference>
<dbReference type="PANTHER" id="PTHR12934:SF11">
    <property type="entry name" value="LARGE RIBOSOMAL SUBUNIT PROTEIN UL15M"/>
    <property type="match status" value="1"/>
</dbReference>
<dbReference type="Pfam" id="PF00828">
    <property type="entry name" value="Ribosomal_L27A"/>
    <property type="match status" value="1"/>
</dbReference>
<dbReference type="SUPFAM" id="SSF52080">
    <property type="entry name" value="Ribosomal proteins L15p and L18e"/>
    <property type="match status" value="1"/>
</dbReference>
<dbReference type="PROSITE" id="PS00475">
    <property type="entry name" value="RIBOSOMAL_L15"/>
    <property type="match status" value="1"/>
</dbReference>
<proteinExistence type="inferred from homology"/>
<keyword id="KW-0687">Ribonucleoprotein</keyword>
<keyword id="KW-0689">Ribosomal protein</keyword>
<keyword id="KW-0694">RNA-binding</keyword>
<keyword id="KW-0699">rRNA-binding</keyword>
<organism>
    <name type="scientific">Staphylococcus aureus (strain Mu50 / ATCC 700699)</name>
    <dbReference type="NCBI Taxonomy" id="158878"/>
    <lineage>
        <taxon>Bacteria</taxon>
        <taxon>Bacillati</taxon>
        <taxon>Bacillota</taxon>
        <taxon>Bacilli</taxon>
        <taxon>Bacillales</taxon>
        <taxon>Staphylococcaceae</taxon>
        <taxon>Staphylococcus</taxon>
    </lineage>
</organism>
<accession>P0A0F5</accession>
<accession>O06445</accession>
<evidence type="ECO:0000255" key="1">
    <source>
        <dbReference type="HAMAP-Rule" id="MF_01341"/>
    </source>
</evidence>
<evidence type="ECO:0000256" key="2">
    <source>
        <dbReference type="SAM" id="MobiDB-lite"/>
    </source>
</evidence>
<evidence type="ECO:0000305" key="3"/>
<sequence length="146" mass="15597">MKLHELKPAEGSRKERNRVGRGVATGNGKTSGRGHKGQKARSGGGVRPGFEGGQLPLFRRLPKRGFTNINRKEYAIVNLDQLNKFEDGTEVTPALLVESGVVKNEKSGIKILGNGSLDKKLTVKAHKFSASAAEAIDAKGGAHEVI</sequence>
<comment type="function">
    <text evidence="1">Binds to the 23S rRNA.</text>
</comment>
<comment type="subunit">
    <text evidence="1">Part of the 50S ribosomal subunit.</text>
</comment>
<comment type="similarity">
    <text evidence="1">Belongs to the universal ribosomal protein uL15 family.</text>
</comment>
<name>RL15_STAAM</name>